<comment type="function">
    <text evidence="1">This protein binds to 23S rRNA in the presence of protein L20.</text>
</comment>
<comment type="subunit">
    <text evidence="1">Part of the 50S ribosomal subunit. Contacts protein L20.</text>
</comment>
<comment type="similarity">
    <text evidence="1">Belongs to the bacterial ribosomal protein bL21 family.</text>
</comment>
<keyword id="KW-1185">Reference proteome</keyword>
<keyword id="KW-0687">Ribonucleoprotein</keyword>
<keyword id="KW-0689">Ribosomal protein</keyword>
<keyword id="KW-0694">RNA-binding</keyword>
<keyword id="KW-0699">rRNA-binding</keyword>
<accession>B1VAF5</accession>
<sequence length="102" mass="11871">MFAIIRTGGKQLRVSEGQEIFVEKLPINPEQNYEFKEVLAVYGEKSILGQPYVEGAKVQAQVIKNDRAKKIIVFKYKRRKKYRCKQGHRQAYTKLLITKIIA</sequence>
<protein>
    <recommendedName>
        <fullName evidence="1">Large ribosomal subunit protein bL21</fullName>
    </recommendedName>
    <alternativeName>
        <fullName evidence="2">50S ribosomal protein L21</fullName>
    </alternativeName>
</protein>
<reference key="1">
    <citation type="journal article" date="2008" name="J. Bacteriol.">
        <title>Comparative genome analysis of 'Candidatus Phytoplasma australiense' (subgroup tuf-Australia I; rp-A) and 'Ca. Phytoplasma asteris' strains OY-M and AY-WB.</title>
        <authorList>
            <person name="Tran-Nguyen L.T."/>
            <person name="Kube M."/>
            <person name="Schneider B."/>
            <person name="Reinhardt R."/>
            <person name="Gibb K.S."/>
        </authorList>
    </citation>
    <scope>NUCLEOTIDE SEQUENCE [LARGE SCALE GENOMIC DNA]</scope>
</reference>
<name>RL21_PHYAS</name>
<organism>
    <name type="scientific">Phytoplasma australiense</name>
    <dbReference type="NCBI Taxonomy" id="59748"/>
    <lineage>
        <taxon>Bacteria</taxon>
        <taxon>Bacillati</taxon>
        <taxon>Mycoplasmatota</taxon>
        <taxon>Mollicutes</taxon>
        <taxon>Acholeplasmatales</taxon>
        <taxon>Acholeplasmataceae</taxon>
        <taxon>Candidatus Phytoplasma</taxon>
        <taxon>16SrXII (Stolbur group)</taxon>
    </lineage>
</organism>
<gene>
    <name evidence="1" type="primary">rplU</name>
    <name type="ordered locus">PA0594</name>
</gene>
<evidence type="ECO:0000255" key="1">
    <source>
        <dbReference type="HAMAP-Rule" id="MF_01363"/>
    </source>
</evidence>
<evidence type="ECO:0000305" key="2"/>
<feature type="chain" id="PRO_1000143831" description="Large ribosomal subunit protein bL21">
    <location>
        <begin position="1"/>
        <end position="102"/>
    </location>
</feature>
<dbReference type="EMBL" id="AM422018">
    <property type="protein sequence ID" value="CAM11928.1"/>
    <property type="molecule type" value="Genomic_DNA"/>
</dbReference>
<dbReference type="SMR" id="B1VAF5"/>
<dbReference type="STRING" id="59748.PA0594"/>
<dbReference type="KEGG" id="pal:PA0594"/>
<dbReference type="eggNOG" id="COG0261">
    <property type="taxonomic scope" value="Bacteria"/>
</dbReference>
<dbReference type="Proteomes" id="UP000008323">
    <property type="component" value="Chromosome"/>
</dbReference>
<dbReference type="GO" id="GO:0005737">
    <property type="term" value="C:cytoplasm"/>
    <property type="evidence" value="ECO:0007669"/>
    <property type="project" value="UniProtKB-ARBA"/>
</dbReference>
<dbReference type="GO" id="GO:1990904">
    <property type="term" value="C:ribonucleoprotein complex"/>
    <property type="evidence" value="ECO:0007669"/>
    <property type="project" value="UniProtKB-KW"/>
</dbReference>
<dbReference type="GO" id="GO:0005840">
    <property type="term" value="C:ribosome"/>
    <property type="evidence" value="ECO:0007669"/>
    <property type="project" value="UniProtKB-KW"/>
</dbReference>
<dbReference type="GO" id="GO:0019843">
    <property type="term" value="F:rRNA binding"/>
    <property type="evidence" value="ECO:0007669"/>
    <property type="project" value="UniProtKB-UniRule"/>
</dbReference>
<dbReference type="GO" id="GO:0003735">
    <property type="term" value="F:structural constituent of ribosome"/>
    <property type="evidence" value="ECO:0007669"/>
    <property type="project" value="InterPro"/>
</dbReference>
<dbReference type="GO" id="GO:0006412">
    <property type="term" value="P:translation"/>
    <property type="evidence" value="ECO:0007669"/>
    <property type="project" value="UniProtKB-UniRule"/>
</dbReference>
<dbReference type="HAMAP" id="MF_01363">
    <property type="entry name" value="Ribosomal_bL21"/>
    <property type="match status" value="1"/>
</dbReference>
<dbReference type="InterPro" id="IPR028909">
    <property type="entry name" value="bL21-like"/>
</dbReference>
<dbReference type="InterPro" id="IPR036164">
    <property type="entry name" value="bL21-like_sf"/>
</dbReference>
<dbReference type="InterPro" id="IPR001787">
    <property type="entry name" value="Ribosomal_bL21"/>
</dbReference>
<dbReference type="InterPro" id="IPR018258">
    <property type="entry name" value="Ribosomal_bL21_CS"/>
</dbReference>
<dbReference type="NCBIfam" id="TIGR00061">
    <property type="entry name" value="L21"/>
    <property type="match status" value="1"/>
</dbReference>
<dbReference type="PANTHER" id="PTHR21349">
    <property type="entry name" value="50S RIBOSOMAL PROTEIN L21"/>
    <property type="match status" value="1"/>
</dbReference>
<dbReference type="PANTHER" id="PTHR21349:SF0">
    <property type="entry name" value="LARGE RIBOSOMAL SUBUNIT PROTEIN BL21M"/>
    <property type="match status" value="1"/>
</dbReference>
<dbReference type="Pfam" id="PF00829">
    <property type="entry name" value="Ribosomal_L21p"/>
    <property type="match status" value="1"/>
</dbReference>
<dbReference type="SUPFAM" id="SSF141091">
    <property type="entry name" value="L21p-like"/>
    <property type="match status" value="1"/>
</dbReference>
<dbReference type="PROSITE" id="PS01169">
    <property type="entry name" value="RIBOSOMAL_L21"/>
    <property type="match status" value="1"/>
</dbReference>
<proteinExistence type="inferred from homology"/>